<organism>
    <name type="scientific">Janthinobacterium sp. (strain Marseille)</name>
    <name type="common">Minibacterium massiliensis</name>
    <dbReference type="NCBI Taxonomy" id="375286"/>
    <lineage>
        <taxon>Bacteria</taxon>
        <taxon>Pseudomonadati</taxon>
        <taxon>Pseudomonadota</taxon>
        <taxon>Betaproteobacteria</taxon>
        <taxon>Burkholderiales</taxon>
        <taxon>Oxalobacteraceae</taxon>
        <taxon>Janthinobacterium</taxon>
    </lineage>
</organism>
<accession>A6SUQ4</accession>
<evidence type="ECO:0000255" key="1">
    <source>
        <dbReference type="HAMAP-Rule" id="MF_00016"/>
    </source>
</evidence>
<protein>
    <recommendedName>
        <fullName evidence="1">Holliday junction branch migration complex subunit RuvB</fullName>
        <ecNumber evidence="1">3.6.4.-</ecNumber>
    </recommendedName>
</protein>
<proteinExistence type="inferred from homology"/>
<comment type="function">
    <text evidence="1">The RuvA-RuvB-RuvC complex processes Holliday junction (HJ) DNA during genetic recombination and DNA repair, while the RuvA-RuvB complex plays an important role in the rescue of blocked DNA replication forks via replication fork reversal (RFR). RuvA specifically binds to HJ cruciform DNA, conferring on it an open structure. The RuvB hexamer acts as an ATP-dependent pump, pulling dsDNA into and through the RuvAB complex. RuvB forms 2 homohexamers on either side of HJ DNA bound by 1 or 2 RuvA tetramers; 4 subunits per hexamer contact DNA at a time. Coordinated motions by a converter formed by DNA-disengaged RuvB subunits stimulates ATP hydrolysis and nucleotide exchange. Immobilization of the converter enables RuvB to convert the ATP-contained energy into a lever motion, pulling 2 nucleotides of DNA out of the RuvA tetramer per ATP hydrolyzed, thus driving DNA branch migration. The RuvB motors rotate together with the DNA substrate, which together with the progressing nucleotide cycle form the mechanistic basis for DNA recombination by continuous HJ branch migration. Branch migration allows RuvC to scan DNA until it finds its consensus sequence, where it cleaves and resolves cruciform DNA.</text>
</comment>
<comment type="catalytic activity">
    <reaction evidence="1">
        <text>ATP + H2O = ADP + phosphate + H(+)</text>
        <dbReference type="Rhea" id="RHEA:13065"/>
        <dbReference type="ChEBI" id="CHEBI:15377"/>
        <dbReference type="ChEBI" id="CHEBI:15378"/>
        <dbReference type="ChEBI" id="CHEBI:30616"/>
        <dbReference type="ChEBI" id="CHEBI:43474"/>
        <dbReference type="ChEBI" id="CHEBI:456216"/>
    </reaction>
</comment>
<comment type="subunit">
    <text evidence="1">Homohexamer. Forms an RuvA(8)-RuvB(12)-Holliday junction (HJ) complex. HJ DNA is sandwiched between 2 RuvA tetramers; dsDNA enters through RuvA and exits via RuvB. An RuvB hexamer assembles on each DNA strand where it exits the tetramer. Each RuvB hexamer is contacted by two RuvA subunits (via domain III) on 2 adjacent RuvB subunits; this complex drives branch migration. In the full resolvosome a probable DNA-RuvA(4)-RuvB(12)-RuvC(2) complex forms which resolves the HJ.</text>
</comment>
<comment type="subcellular location">
    <subcellularLocation>
        <location evidence="1">Cytoplasm</location>
    </subcellularLocation>
</comment>
<comment type="domain">
    <text evidence="1">Has 3 domains, the large (RuvB-L) and small ATPase (RuvB-S) domains and the C-terminal head (RuvB-H) domain. The head domain binds DNA, while the ATPase domains jointly bind ATP, ADP or are empty depending on the state of the subunit in the translocation cycle. During a single DNA translocation step the structure of each domain remains the same, but their relative positions change.</text>
</comment>
<comment type="similarity">
    <text evidence="1">Belongs to the RuvB family.</text>
</comment>
<keyword id="KW-0067">ATP-binding</keyword>
<keyword id="KW-0963">Cytoplasm</keyword>
<keyword id="KW-0227">DNA damage</keyword>
<keyword id="KW-0233">DNA recombination</keyword>
<keyword id="KW-0234">DNA repair</keyword>
<keyword id="KW-0238">DNA-binding</keyword>
<keyword id="KW-0378">Hydrolase</keyword>
<keyword id="KW-0547">Nucleotide-binding</keyword>
<gene>
    <name evidence="1" type="primary">ruvB</name>
    <name type="ordered locus">mma_0311</name>
</gene>
<reference key="1">
    <citation type="journal article" date="2007" name="PLoS Genet.">
        <title>Genome analysis of Minibacterium massiliensis highlights the convergent evolution of water-living bacteria.</title>
        <authorList>
            <person name="Audic S."/>
            <person name="Robert C."/>
            <person name="Campagna B."/>
            <person name="Parinello H."/>
            <person name="Claverie J.-M."/>
            <person name="Raoult D."/>
            <person name="Drancourt M."/>
        </authorList>
    </citation>
    <scope>NUCLEOTIDE SEQUENCE [LARGE SCALE GENOMIC DNA]</scope>
    <source>
        <strain>Marseille</strain>
    </source>
</reference>
<name>RUVB_JANMA</name>
<feature type="chain" id="PRO_0000322801" description="Holliday junction branch migration complex subunit RuvB">
    <location>
        <begin position="1"/>
        <end position="352"/>
    </location>
</feature>
<feature type="region of interest" description="Large ATPase domain (RuvB-L)" evidence="1">
    <location>
        <begin position="5"/>
        <end position="191"/>
    </location>
</feature>
<feature type="region of interest" description="Small ATPAse domain (RuvB-S)" evidence="1">
    <location>
        <begin position="192"/>
        <end position="262"/>
    </location>
</feature>
<feature type="region of interest" description="Head domain (RuvB-H)" evidence="1">
    <location>
        <begin position="265"/>
        <end position="352"/>
    </location>
</feature>
<feature type="binding site" evidence="1">
    <location>
        <position position="30"/>
    </location>
    <ligand>
        <name>ATP</name>
        <dbReference type="ChEBI" id="CHEBI:30616"/>
    </ligand>
</feature>
<feature type="binding site" evidence="1">
    <location>
        <position position="31"/>
    </location>
    <ligand>
        <name>ATP</name>
        <dbReference type="ChEBI" id="CHEBI:30616"/>
    </ligand>
</feature>
<feature type="binding site" evidence="1">
    <location>
        <position position="72"/>
    </location>
    <ligand>
        <name>ATP</name>
        <dbReference type="ChEBI" id="CHEBI:30616"/>
    </ligand>
</feature>
<feature type="binding site" evidence="1">
    <location>
        <position position="75"/>
    </location>
    <ligand>
        <name>ATP</name>
        <dbReference type="ChEBI" id="CHEBI:30616"/>
    </ligand>
</feature>
<feature type="binding site" evidence="1">
    <location>
        <position position="76"/>
    </location>
    <ligand>
        <name>ATP</name>
        <dbReference type="ChEBI" id="CHEBI:30616"/>
    </ligand>
</feature>
<feature type="binding site" evidence="1">
    <location>
        <position position="76"/>
    </location>
    <ligand>
        <name>Mg(2+)</name>
        <dbReference type="ChEBI" id="CHEBI:18420"/>
    </ligand>
</feature>
<feature type="binding site" evidence="1">
    <location>
        <position position="77"/>
    </location>
    <ligand>
        <name>ATP</name>
        <dbReference type="ChEBI" id="CHEBI:30616"/>
    </ligand>
</feature>
<feature type="binding site" evidence="1">
    <location>
        <begin position="138"/>
        <end position="140"/>
    </location>
    <ligand>
        <name>ATP</name>
        <dbReference type="ChEBI" id="CHEBI:30616"/>
    </ligand>
</feature>
<feature type="binding site" evidence="1">
    <location>
        <position position="181"/>
    </location>
    <ligand>
        <name>ATP</name>
        <dbReference type="ChEBI" id="CHEBI:30616"/>
    </ligand>
</feature>
<feature type="binding site" evidence="1">
    <location>
        <position position="191"/>
    </location>
    <ligand>
        <name>ATP</name>
        <dbReference type="ChEBI" id="CHEBI:30616"/>
    </ligand>
</feature>
<feature type="binding site" evidence="1">
    <location>
        <position position="228"/>
    </location>
    <ligand>
        <name>ATP</name>
        <dbReference type="ChEBI" id="CHEBI:30616"/>
    </ligand>
</feature>
<feature type="binding site" evidence="1">
    <location>
        <position position="301"/>
    </location>
    <ligand>
        <name>DNA</name>
        <dbReference type="ChEBI" id="CHEBI:16991"/>
    </ligand>
</feature>
<feature type="binding site" evidence="1">
    <location>
        <position position="320"/>
    </location>
    <ligand>
        <name>DNA</name>
        <dbReference type="ChEBI" id="CHEBI:16991"/>
    </ligand>
</feature>
<feature type="binding site" evidence="1">
    <location>
        <position position="325"/>
    </location>
    <ligand>
        <name>DNA</name>
        <dbReference type="ChEBI" id="CHEBI:16991"/>
    </ligand>
</feature>
<sequence>MSIQTDDFSEQRIIAATPASANEEAIERALRPKQLDEYVGQEKIRGQLEIFITAARQRHEALDHTLLFGPPGLGKTTLAHIIAREMGVNLRQTSGPVLERAGDLAALLTNLEANDVLFIDEIHRLSPVVEEILYPALEDYQIDIMIGEGPAARSVRLDLQPFTLVGATTRAGMLTNPLRDRFGIVARLEFYTPLELTKIVTRSSALLNAPIDEDGAFEIAKRSRGTPRIANRLLRRVRDYAEVKGNGKITKAMADAALVMLDVDPVGFDLMDRKLLEAVLFKFNGGPVGLDNLAAAIGEERDTIEDVLEPYLIQQGFLQRTPRGRIATPVAYAHFGVTAPQTGPNGDLWAGQ</sequence>
<dbReference type="EC" id="3.6.4.-" evidence="1"/>
<dbReference type="EMBL" id="CP000269">
    <property type="protein sequence ID" value="ABR88318.1"/>
    <property type="molecule type" value="Genomic_DNA"/>
</dbReference>
<dbReference type="RefSeq" id="WP_012078176.1">
    <property type="nucleotide sequence ID" value="NC_009659.1"/>
</dbReference>
<dbReference type="SMR" id="A6SUQ4"/>
<dbReference type="STRING" id="375286.mma_0311"/>
<dbReference type="KEGG" id="mms:mma_0311"/>
<dbReference type="eggNOG" id="COG2255">
    <property type="taxonomic scope" value="Bacteria"/>
</dbReference>
<dbReference type="HOGENOM" id="CLU_055599_1_0_4"/>
<dbReference type="OrthoDB" id="9804478at2"/>
<dbReference type="Proteomes" id="UP000006388">
    <property type="component" value="Chromosome"/>
</dbReference>
<dbReference type="GO" id="GO:0005737">
    <property type="term" value="C:cytoplasm"/>
    <property type="evidence" value="ECO:0007669"/>
    <property type="project" value="UniProtKB-SubCell"/>
</dbReference>
<dbReference type="GO" id="GO:0048476">
    <property type="term" value="C:Holliday junction resolvase complex"/>
    <property type="evidence" value="ECO:0007669"/>
    <property type="project" value="UniProtKB-UniRule"/>
</dbReference>
<dbReference type="GO" id="GO:0005524">
    <property type="term" value="F:ATP binding"/>
    <property type="evidence" value="ECO:0007669"/>
    <property type="project" value="UniProtKB-UniRule"/>
</dbReference>
<dbReference type="GO" id="GO:0016887">
    <property type="term" value="F:ATP hydrolysis activity"/>
    <property type="evidence" value="ECO:0007669"/>
    <property type="project" value="InterPro"/>
</dbReference>
<dbReference type="GO" id="GO:0000400">
    <property type="term" value="F:four-way junction DNA binding"/>
    <property type="evidence" value="ECO:0007669"/>
    <property type="project" value="UniProtKB-UniRule"/>
</dbReference>
<dbReference type="GO" id="GO:0009378">
    <property type="term" value="F:four-way junction helicase activity"/>
    <property type="evidence" value="ECO:0007669"/>
    <property type="project" value="InterPro"/>
</dbReference>
<dbReference type="GO" id="GO:0006310">
    <property type="term" value="P:DNA recombination"/>
    <property type="evidence" value="ECO:0007669"/>
    <property type="project" value="UniProtKB-UniRule"/>
</dbReference>
<dbReference type="GO" id="GO:0006281">
    <property type="term" value="P:DNA repair"/>
    <property type="evidence" value="ECO:0007669"/>
    <property type="project" value="UniProtKB-UniRule"/>
</dbReference>
<dbReference type="CDD" id="cd00009">
    <property type="entry name" value="AAA"/>
    <property type="match status" value="1"/>
</dbReference>
<dbReference type="FunFam" id="1.10.10.10:FF:000086">
    <property type="entry name" value="Holliday junction ATP-dependent DNA helicase RuvB"/>
    <property type="match status" value="1"/>
</dbReference>
<dbReference type="FunFam" id="3.40.50.300:FF:000073">
    <property type="entry name" value="Holliday junction ATP-dependent DNA helicase RuvB"/>
    <property type="match status" value="1"/>
</dbReference>
<dbReference type="Gene3D" id="1.10.8.60">
    <property type="match status" value="1"/>
</dbReference>
<dbReference type="Gene3D" id="3.40.50.300">
    <property type="entry name" value="P-loop containing nucleotide triphosphate hydrolases"/>
    <property type="match status" value="1"/>
</dbReference>
<dbReference type="Gene3D" id="1.10.10.10">
    <property type="entry name" value="Winged helix-like DNA-binding domain superfamily/Winged helix DNA-binding domain"/>
    <property type="match status" value="1"/>
</dbReference>
<dbReference type="HAMAP" id="MF_00016">
    <property type="entry name" value="DNA_HJ_migration_RuvB"/>
    <property type="match status" value="1"/>
</dbReference>
<dbReference type="InterPro" id="IPR003593">
    <property type="entry name" value="AAA+_ATPase"/>
</dbReference>
<dbReference type="InterPro" id="IPR041445">
    <property type="entry name" value="AAA_lid_4"/>
</dbReference>
<dbReference type="InterPro" id="IPR004605">
    <property type="entry name" value="DNA_helicase_Holl-junc_RuvB"/>
</dbReference>
<dbReference type="InterPro" id="IPR027417">
    <property type="entry name" value="P-loop_NTPase"/>
</dbReference>
<dbReference type="InterPro" id="IPR008824">
    <property type="entry name" value="RuvB-like_N"/>
</dbReference>
<dbReference type="InterPro" id="IPR008823">
    <property type="entry name" value="RuvB_C"/>
</dbReference>
<dbReference type="InterPro" id="IPR036388">
    <property type="entry name" value="WH-like_DNA-bd_sf"/>
</dbReference>
<dbReference type="InterPro" id="IPR036390">
    <property type="entry name" value="WH_DNA-bd_sf"/>
</dbReference>
<dbReference type="NCBIfam" id="NF000868">
    <property type="entry name" value="PRK00080.1"/>
    <property type="match status" value="1"/>
</dbReference>
<dbReference type="NCBIfam" id="TIGR00635">
    <property type="entry name" value="ruvB"/>
    <property type="match status" value="1"/>
</dbReference>
<dbReference type="PANTHER" id="PTHR42848">
    <property type="match status" value="1"/>
</dbReference>
<dbReference type="PANTHER" id="PTHR42848:SF1">
    <property type="entry name" value="HOLLIDAY JUNCTION BRANCH MIGRATION COMPLEX SUBUNIT RUVB"/>
    <property type="match status" value="1"/>
</dbReference>
<dbReference type="Pfam" id="PF17864">
    <property type="entry name" value="AAA_lid_4"/>
    <property type="match status" value="1"/>
</dbReference>
<dbReference type="Pfam" id="PF05491">
    <property type="entry name" value="RuvB_C"/>
    <property type="match status" value="1"/>
</dbReference>
<dbReference type="Pfam" id="PF05496">
    <property type="entry name" value="RuvB_N"/>
    <property type="match status" value="1"/>
</dbReference>
<dbReference type="SMART" id="SM00382">
    <property type="entry name" value="AAA"/>
    <property type="match status" value="1"/>
</dbReference>
<dbReference type="SUPFAM" id="SSF52540">
    <property type="entry name" value="P-loop containing nucleoside triphosphate hydrolases"/>
    <property type="match status" value="1"/>
</dbReference>
<dbReference type="SUPFAM" id="SSF46785">
    <property type="entry name" value="Winged helix' DNA-binding domain"/>
    <property type="match status" value="1"/>
</dbReference>